<feature type="chain" id="PRO_0000256600" description="Trigger factor">
    <location>
        <begin position="1"/>
        <end position="494"/>
    </location>
</feature>
<feature type="domain" description="PPIase FKBP-type" evidence="1">
    <location>
        <begin position="169"/>
        <end position="254"/>
    </location>
</feature>
<feature type="region of interest" description="Disordered" evidence="2">
    <location>
        <begin position="440"/>
        <end position="494"/>
    </location>
</feature>
<evidence type="ECO:0000255" key="1">
    <source>
        <dbReference type="HAMAP-Rule" id="MF_00303"/>
    </source>
</evidence>
<evidence type="ECO:0000256" key="2">
    <source>
        <dbReference type="SAM" id="MobiDB-lite"/>
    </source>
</evidence>
<accession>Q2K952</accession>
<organism>
    <name type="scientific">Rhizobium etli (strain ATCC 51251 / DSM 11541 / JCM 21823 / NBRC 15573 / CFN 42)</name>
    <dbReference type="NCBI Taxonomy" id="347834"/>
    <lineage>
        <taxon>Bacteria</taxon>
        <taxon>Pseudomonadati</taxon>
        <taxon>Pseudomonadota</taxon>
        <taxon>Alphaproteobacteria</taxon>
        <taxon>Hyphomicrobiales</taxon>
        <taxon>Rhizobiaceae</taxon>
        <taxon>Rhizobium/Agrobacterium group</taxon>
        <taxon>Rhizobium</taxon>
    </lineage>
</organism>
<name>TIG_RHIEC</name>
<sequence>MQVIETLAEGLKREIKVVIPAKDMEDKMNERLADVKDKIRINGFRPGKVPAAHLKKVYGKSIMADLVNEIVREQPAAILSSRGEKSATQPEIAMTEDKDEADKILTAQQDFEFTLSYEVLPPIELKSVKGIKVTREVIDISDDEVNEQVLKVAESARSYESKTGKAANGDRITMDYVGKVDDEAFEGGTDQGAELVIGSGRFIPGFEDQLVGVKAGEEKTITVTFPADYPAKNLAGKEATFDVTVKDVAAPGAVEINDELASKLGIESADRLKEIVRGQIESQYGSLTRQKLKRQILDQLDEMYKFDTPASLVDAEYNGIWSQVNNDLAQSGKTFEDEDTTEEKAREEYKTLAERRVRLGLVLSEIGEKAGVEVTEDEMQRAIYDQLRQYPGQEKQILEFFRSQPGAAASIRAPIFEEKVIDHLLTEIDVTDKKVTKEELLAEDEGEAKAETKKAAPKKKAAAKSEAAEAGEGEEAAPKKKAAPKKKASEDSAE</sequence>
<comment type="function">
    <text evidence="1">Involved in protein export. Acts as a chaperone by maintaining the newly synthesized protein in an open conformation. Functions as a peptidyl-prolyl cis-trans isomerase.</text>
</comment>
<comment type="catalytic activity">
    <reaction evidence="1">
        <text>[protein]-peptidylproline (omega=180) = [protein]-peptidylproline (omega=0)</text>
        <dbReference type="Rhea" id="RHEA:16237"/>
        <dbReference type="Rhea" id="RHEA-COMP:10747"/>
        <dbReference type="Rhea" id="RHEA-COMP:10748"/>
        <dbReference type="ChEBI" id="CHEBI:83833"/>
        <dbReference type="ChEBI" id="CHEBI:83834"/>
        <dbReference type="EC" id="5.2.1.8"/>
    </reaction>
</comment>
<comment type="subcellular location">
    <subcellularLocation>
        <location>Cytoplasm</location>
    </subcellularLocation>
    <text evidence="1">About half TF is bound to the ribosome near the polypeptide exit tunnel while the other half is free in the cytoplasm.</text>
</comment>
<comment type="domain">
    <text evidence="1">Consists of 3 domains; the N-terminus binds the ribosome, the middle domain has PPIase activity, while the C-terminus has intrinsic chaperone activity on its own.</text>
</comment>
<comment type="similarity">
    <text evidence="1">Belongs to the FKBP-type PPIase family. Tig subfamily.</text>
</comment>
<reference key="1">
    <citation type="journal article" date="2006" name="Proc. Natl. Acad. Sci. U.S.A.">
        <title>The partitioned Rhizobium etli genome: genetic and metabolic redundancy in seven interacting replicons.</title>
        <authorList>
            <person name="Gonzalez V."/>
            <person name="Santamaria R.I."/>
            <person name="Bustos P."/>
            <person name="Hernandez-Gonzalez I."/>
            <person name="Medrano-Soto A."/>
            <person name="Moreno-Hagelsieb G."/>
            <person name="Janga S.C."/>
            <person name="Ramirez M.A."/>
            <person name="Jimenez-Jacinto V."/>
            <person name="Collado-Vides J."/>
            <person name="Davila G."/>
        </authorList>
    </citation>
    <scope>NUCLEOTIDE SEQUENCE [LARGE SCALE GENOMIC DNA]</scope>
    <source>
        <strain>ATCC 51251 / DSM 11541 / JCM 21823 / NBRC 15573 / CFN 42</strain>
    </source>
</reference>
<dbReference type="EC" id="5.2.1.8" evidence="1"/>
<dbReference type="EMBL" id="CP000133">
    <property type="protein sequence ID" value="ABC90634.1"/>
    <property type="molecule type" value="Genomic_DNA"/>
</dbReference>
<dbReference type="RefSeq" id="WP_011425130.1">
    <property type="nucleotide sequence ID" value="NC_007761.1"/>
</dbReference>
<dbReference type="SMR" id="Q2K952"/>
<dbReference type="KEGG" id="ret:RHE_CH01842"/>
<dbReference type="eggNOG" id="COG0544">
    <property type="taxonomic scope" value="Bacteria"/>
</dbReference>
<dbReference type="HOGENOM" id="CLU_033058_2_2_5"/>
<dbReference type="OrthoDB" id="9767721at2"/>
<dbReference type="Proteomes" id="UP000001936">
    <property type="component" value="Chromosome"/>
</dbReference>
<dbReference type="GO" id="GO:0005737">
    <property type="term" value="C:cytoplasm"/>
    <property type="evidence" value="ECO:0007669"/>
    <property type="project" value="UniProtKB-SubCell"/>
</dbReference>
<dbReference type="GO" id="GO:0003755">
    <property type="term" value="F:peptidyl-prolyl cis-trans isomerase activity"/>
    <property type="evidence" value="ECO:0007669"/>
    <property type="project" value="UniProtKB-UniRule"/>
</dbReference>
<dbReference type="GO" id="GO:0044183">
    <property type="term" value="F:protein folding chaperone"/>
    <property type="evidence" value="ECO:0007669"/>
    <property type="project" value="TreeGrafter"/>
</dbReference>
<dbReference type="GO" id="GO:0043022">
    <property type="term" value="F:ribosome binding"/>
    <property type="evidence" value="ECO:0007669"/>
    <property type="project" value="TreeGrafter"/>
</dbReference>
<dbReference type="GO" id="GO:0051083">
    <property type="term" value="P:'de novo' cotranslational protein folding"/>
    <property type="evidence" value="ECO:0007669"/>
    <property type="project" value="TreeGrafter"/>
</dbReference>
<dbReference type="GO" id="GO:0051301">
    <property type="term" value="P:cell division"/>
    <property type="evidence" value="ECO:0007669"/>
    <property type="project" value="UniProtKB-KW"/>
</dbReference>
<dbReference type="GO" id="GO:0061077">
    <property type="term" value="P:chaperone-mediated protein folding"/>
    <property type="evidence" value="ECO:0007669"/>
    <property type="project" value="TreeGrafter"/>
</dbReference>
<dbReference type="GO" id="GO:0015031">
    <property type="term" value="P:protein transport"/>
    <property type="evidence" value="ECO:0007669"/>
    <property type="project" value="UniProtKB-UniRule"/>
</dbReference>
<dbReference type="GO" id="GO:0043335">
    <property type="term" value="P:protein unfolding"/>
    <property type="evidence" value="ECO:0007669"/>
    <property type="project" value="TreeGrafter"/>
</dbReference>
<dbReference type="FunFam" id="3.10.50.40:FF:000001">
    <property type="entry name" value="Trigger factor"/>
    <property type="match status" value="1"/>
</dbReference>
<dbReference type="Gene3D" id="3.10.50.40">
    <property type="match status" value="1"/>
</dbReference>
<dbReference type="Gene3D" id="3.30.70.1050">
    <property type="entry name" value="Trigger factor ribosome-binding domain"/>
    <property type="match status" value="1"/>
</dbReference>
<dbReference type="Gene3D" id="1.10.3120.10">
    <property type="entry name" value="Trigger factor, C-terminal domain"/>
    <property type="match status" value="1"/>
</dbReference>
<dbReference type="HAMAP" id="MF_00303">
    <property type="entry name" value="Trigger_factor_Tig"/>
    <property type="match status" value="1"/>
</dbReference>
<dbReference type="InterPro" id="IPR046357">
    <property type="entry name" value="PPIase_dom_sf"/>
</dbReference>
<dbReference type="InterPro" id="IPR001179">
    <property type="entry name" value="PPIase_FKBP_dom"/>
</dbReference>
<dbReference type="InterPro" id="IPR005215">
    <property type="entry name" value="Trig_fac"/>
</dbReference>
<dbReference type="InterPro" id="IPR008880">
    <property type="entry name" value="Trigger_fac_C"/>
</dbReference>
<dbReference type="InterPro" id="IPR037041">
    <property type="entry name" value="Trigger_fac_C_sf"/>
</dbReference>
<dbReference type="InterPro" id="IPR008881">
    <property type="entry name" value="Trigger_fac_ribosome-bd_bac"/>
</dbReference>
<dbReference type="InterPro" id="IPR036611">
    <property type="entry name" value="Trigger_fac_ribosome-bd_sf"/>
</dbReference>
<dbReference type="InterPro" id="IPR027304">
    <property type="entry name" value="Trigger_fact/SurA_dom_sf"/>
</dbReference>
<dbReference type="NCBIfam" id="TIGR00115">
    <property type="entry name" value="tig"/>
    <property type="match status" value="1"/>
</dbReference>
<dbReference type="PANTHER" id="PTHR30560">
    <property type="entry name" value="TRIGGER FACTOR CHAPERONE AND PEPTIDYL-PROLYL CIS/TRANS ISOMERASE"/>
    <property type="match status" value="1"/>
</dbReference>
<dbReference type="PANTHER" id="PTHR30560:SF3">
    <property type="entry name" value="TRIGGER FACTOR-LIKE PROTEIN TIG, CHLOROPLASTIC"/>
    <property type="match status" value="1"/>
</dbReference>
<dbReference type="Pfam" id="PF00254">
    <property type="entry name" value="FKBP_C"/>
    <property type="match status" value="1"/>
</dbReference>
<dbReference type="Pfam" id="PF05698">
    <property type="entry name" value="Trigger_C"/>
    <property type="match status" value="1"/>
</dbReference>
<dbReference type="Pfam" id="PF05697">
    <property type="entry name" value="Trigger_N"/>
    <property type="match status" value="1"/>
</dbReference>
<dbReference type="PIRSF" id="PIRSF003095">
    <property type="entry name" value="Trigger_factor"/>
    <property type="match status" value="1"/>
</dbReference>
<dbReference type="SUPFAM" id="SSF54534">
    <property type="entry name" value="FKBP-like"/>
    <property type="match status" value="1"/>
</dbReference>
<dbReference type="SUPFAM" id="SSF109998">
    <property type="entry name" value="Triger factor/SurA peptide-binding domain-like"/>
    <property type="match status" value="1"/>
</dbReference>
<dbReference type="SUPFAM" id="SSF102735">
    <property type="entry name" value="Trigger factor ribosome-binding domain"/>
    <property type="match status" value="1"/>
</dbReference>
<dbReference type="PROSITE" id="PS50059">
    <property type="entry name" value="FKBP_PPIASE"/>
    <property type="match status" value="1"/>
</dbReference>
<proteinExistence type="inferred from homology"/>
<gene>
    <name evidence="1" type="primary">tig</name>
    <name type="ordered locus">RHE_CH01842</name>
</gene>
<protein>
    <recommendedName>
        <fullName evidence="1">Trigger factor</fullName>
        <shortName evidence="1">TF</shortName>
        <ecNumber evidence="1">5.2.1.8</ecNumber>
    </recommendedName>
    <alternativeName>
        <fullName evidence="1">PPIase</fullName>
    </alternativeName>
</protein>
<keyword id="KW-0131">Cell cycle</keyword>
<keyword id="KW-0132">Cell division</keyword>
<keyword id="KW-0143">Chaperone</keyword>
<keyword id="KW-0963">Cytoplasm</keyword>
<keyword id="KW-0413">Isomerase</keyword>
<keyword id="KW-1185">Reference proteome</keyword>
<keyword id="KW-0697">Rotamase</keyword>